<name>RK2_CALFG</name>
<proteinExistence type="inferred from homology"/>
<organism>
    <name type="scientific">Calycanthus floridus var. glaucus</name>
    <name type="common">Eastern sweetshrub</name>
    <name type="synonym">Calycanthus fertilis var. ferax</name>
    <dbReference type="NCBI Taxonomy" id="212734"/>
    <lineage>
        <taxon>Eukaryota</taxon>
        <taxon>Viridiplantae</taxon>
        <taxon>Streptophyta</taxon>
        <taxon>Embryophyta</taxon>
        <taxon>Tracheophyta</taxon>
        <taxon>Spermatophyta</taxon>
        <taxon>Magnoliopsida</taxon>
        <taxon>Magnoliidae</taxon>
        <taxon>Laurales</taxon>
        <taxon>Calycanthaceae</taxon>
        <taxon>Calycanthus</taxon>
    </lineage>
</organism>
<geneLocation type="chloroplast"/>
<evidence type="ECO:0000250" key="1"/>
<evidence type="ECO:0000255" key="2">
    <source>
        <dbReference type="HAMAP-Rule" id="MF_01320"/>
    </source>
</evidence>
<evidence type="ECO:0000256" key="3">
    <source>
        <dbReference type="SAM" id="MobiDB-lite"/>
    </source>
</evidence>
<evidence type="ECO:0000305" key="4"/>
<keyword id="KW-0150">Chloroplast</keyword>
<keyword id="KW-0934">Plastid</keyword>
<keyword id="KW-0687">Ribonucleoprotein</keyword>
<keyword id="KW-0689">Ribosomal protein</keyword>
<protein>
    <recommendedName>
        <fullName evidence="2">Large ribosomal subunit protein uL2c</fullName>
    </recommendedName>
    <alternativeName>
        <fullName evidence="4">50S ribosomal protein L2, chloroplastic</fullName>
    </alternativeName>
</protein>
<accession>Q7YJT7</accession>
<dbReference type="EMBL" id="AJ428413">
    <property type="protein sequence ID" value="CAD28762.1"/>
    <property type="molecule type" value="Genomic_DNA"/>
</dbReference>
<dbReference type="RefSeq" id="NP_862795.1">
    <property type="nucleotide sequence ID" value="NC_004993.1"/>
</dbReference>
<dbReference type="SMR" id="Q7YJT7"/>
<dbReference type="GeneID" id="2598023"/>
<dbReference type="GO" id="GO:0009507">
    <property type="term" value="C:chloroplast"/>
    <property type="evidence" value="ECO:0007669"/>
    <property type="project" value="UniProtKB-SubCell"/>
</dbReference>
<dbReference type="GO" id="GO:0005762">
    <property type="term" value="C:mitochondrial large ribosomal subunit"/>
    <property type="evidence" value="ECO:0007669"/>
    <property type="project" value="TreeGrafter"/>
</dbReference>
<dbReference type="GO" id="GO:0019843">
    <property type="term" value="F:rRNA binding"/>
    <property type="evidence" value="ECO:0007669"/>
    <property type="project" value="UniProtKB-UniRule"/>
</dbReference>
<dbReference type="GO" id="GO:0003735">
    <property type="term" value="F:structural constituent of ribosome"/>
    <property type="evidence" value="ECO:0007669"/>
    <property type="project" value="InterPro"/>
</dbReference>
<dbReference type="GO" id="GO:0016740">
    <property type="term" value="F:transferase activity"/>
    <property type="evidence" value="ECO:0007669"/>
    <property type="project" value="InterPro"/>
</dbReference>
<dbReference type="GO" id="GO:0032543">
    <property type="term" value="P:mitochondrial translation"/>
    <property type="evidence" value="ECO:0007669"/>
    <property type="project" value="TreeGrafter"/>
</dbReference>
<dbReference type="FunFam" id="4.10.950.10:FF:000001">
    <property type="entry name" value="50S ribosomal protein L2"/>
    <property type="match status" value="1"/>
</dbReference>
<dbReference type="FunFam" id="2.30.30.30:FF:000008">
    <property type="entry name" value="50S ribosomal protein L2, chloroplastic"/>
    <property type="match status" value="1"/>
</dbReference>
<dbReference type="FunFam" id="2.40.50.140:FF:000029">
    <property type="entry name" value="50S ribosomal protein L2, chloroplastic"/>
    <property type="match status" value="1"/>
</dbReference>
<dbReference type="Gene3D" id="2.30.30.30">
    <property type="match status" value="1"/>
</dbReference>
<dbReference type="Gene3D" id="2.40.50.140">
    <property type="entry name" value="Nucleic acid-binding proteins"/>
    <property type="match status" value="1"/>
</dbReference>
<dbReference type="Gene3D" id="4.10.950.10">
    <property type="entry name" value="Ribosomal protein L2, domain 3"/>
    <property type="match status" value="1"/>
</dbReference>
<dbReference type="HAMAP" id="MF_01320_B">
    <property type="entry name" value="Ribosomal_uL2_B"/>
    <property type="match status" value="1"/>
</dbReference>
<dbReference type="InterPro" id="IPR012340">
    <property type="entry name" value="NA-bd_OB-fold"/>
</dbReference>
<dbReference type="InterPro" id="IPR014722">
    <property type="entry name" value="Rib_uL2_dom2"/>
</dbReference>
<dbReference type="InterPro" id="IPR002171">
    <property type="entry name" value="Ribosomal_uL2"/>
</dbReference>
<dbReference type="InterPro" id="IPR005880">
    <property type="entry name" value="Ribosomal_uL2_bac/org-type"/>
</dbReference>
<dbReference type="InterPro" id="IPR022669">
    <property type="entry name" value="Ribosomal_uL2_C"/>
</dbReference>
<dbReference type="InterPro" id="IPR022671">
    <property type="entry name" value="Ribosomal_uL2_CS"/>
</dbReference>
<dbReference type="InterPro" id="IPR014726">
    <property type="entry name" value="Ribosomal_uL2_dom3"/>
</dbReference>
<dbReference type="InterPro" id="IPR022666">
    <property type="entry name" value="Ribosomal_uL2_RNA-bd_dom"/>
</dbReference>
<dbReference type="InterPro" id="IPR008991">
    <property type="entry name" value="Translation_prot_SH3-like_sf"/>
</dbReference>
<dbReference type="NCBIfam" id="TIGR01171">
    <property type="entry name" value="rplB_bact"/>
    <property type="match status" value="1"/>
</dbReference>
<dbReference type="PANTHER" id="PTHR13691:SF5">
    <property type="entry name" value="LARGE RIBOSOMAL SUBUNIT PROTEIN UL2M"/>
    <property type="match status" value="1"/>
</dbReference>
<dbReference type="PANTHER" id="PTHR13691">
    <property type="entry name" value="RIBOSOMAL PROTEIN L2"/>
    <property type="match status" value="1"/>
</dbReference>
<dbReference type="Pfam" id="PF00181">
    <property type="entry name" value="Ribosomal_L2"/>
    <property type="match status" value="1"/>
</dbReference>
<dbReference type="Pfam" id="PF03947">
    <property type="entry name" value="Ribosomal_L2_C"/>
    <property type="match status" value="1"/>
</dbReference>
<dbReference type="PIRSF" id="PIRSF002158">
    <property type="entry name" value="Ribosomal_L2"/>
    <property type="match status" value="1"/>
</dbReference>
<dbReference type="SMART" id="SM01383">
    <property type="entry name" value="Ribosomal_L2"/>
    <property type="match status" value="1"/>
</dbReference>
<dbReference type="SMART" id="SM01382">
    <property type="entry name" value="Ribosomal_L2_C"/>
    <property type="match status" value="1"/>
</dbReference>
<dbReference type="SUPFAM" id="SSF50249">
    <property type="entry name" value="Nucleic acid-binding proteins"/>
    <property type="match status" value="1"/>
</dbReference>
<dbReference type="SUPFAM" id="SSF50104">
    <property type="entry name" value="Translation proteins SH3-like domain"/>
    <property type="match status" value="1"/>
</dbReference>
<dbReference type="PROSITE" id="PS00467">
    <property type="entry name" value="RIBOSOMAL_L2"/>
    <property type="match status" value="1"/>
</dbReference>
<comment type="subunit">
    <text evidence="1">Part of the 50S ribosomal subunit.</text>
</comment>
<comment type="subcellular location">
    <subcellularLocation>
        <location>Plastid</location>
        <location>Chloroplast</location>
    </subcellularLocation>
</comment>
<comment type="similarity">
    <text evidence="4">Belongs to the universal ribosomal protein uL2 family.</text>
</comment>
<sequence>MAIHLYKTSTPSTRNGAVDGQVKSNPRNNLIYGQHHCSKGRNARGIITARHRGGGHKRLYRKIDFRRNEKDISGRIVTIEYDPNRNAYICLIHYGDGEKRYILHPRGAIIGDTIVSGTEVPISMGNALPLTDMPLGTAIHNIEITLGKGGQLARAAGAVAKLIAKEGKSATLRLPSGEVRLISKNCSATVGQVGNVGVNQKSLGRAGSKRWLGKRPVVRGVVMNPVDHPHGGGEGRAPIGRKKPTTPWGYPALGRRSRKRNKYSDSFILRRRK</sequence>
<reference key="1">
    <citation type="journal article" date="2003" name="Plant Syst. Evol.">
        <title>The chloroplast genome of the 'basal' angiosperm Calycanthus fertilis -- structural and phylogenetic analyses.</title>
        <authorList>
            <person name="Goremykin V."/>
            <person name="Hirsch-Ernst K.I."/>
            <person name="Woelfl S."/>
            <person name="Hellwig F.H."/>
        </authorList>
    </citation>
    <scope>NUCLEOTIDE SEQUENCE [LARGE SCALE GENOMIC DNA]</scope>
</reference>
<feature type="chain" id="PRO_0000129668" description="Large ribosomal subunit protein uL2c">
    <location>
        <begin position="1"/>
        <end position="273"/>
    </location>
</feature>
<feature type="region of interest" description="Disordered" evidence="3">
    <location>
        <begin position="223"/>
        <end position="273"/>
    </location>
</feature>
<gene>
    <name type="primary">rpl2</name>
</gene>